<proteinExistence type="inferred from homology"/>
<accession>Q7NJE8</accession>
<protein>
    <recommendedName>
        <fullName evidence="1">Bifunctional protein FolD</fullName>
    </recommendedName>
    <domain>
        <recommendedName>
            <fullName evidence="1">Methylenetetrahydrofolate dehydrogenase</fullName>
            <ecNumber evidence="1">1.5.1.5</ecNumber>
        </recommendedName>
    </domain>
    <domain>
        <recommendedName>
            <fullName evidence="1">Methenyltetrahydrofolate cyclohydrolase</fullName>
            <ecNumber evidence="1">3.5.4.9</ecNumber>
        </recommendedName>
    </domain>
</protein>
<reference key="1">
    <citation type="journal article" date="2003" name="DNA Res.">
        <title>Complete genome structure of Gloeobacter violaceus PCC 7421, a cyanobacterium that lacks thylakoids.</title>
        <authorList>
            <person name="Nakamura Y."/>
            <person name="Kaneko T."/>
            <person name="Sato S."/>
            <person name="Mimuro M."/>
            <person name="Miyashita H."/>
            <person name="Tsuchiya T."/>
            <person name="Sasamoto S."/>
            <person name="Watanabe A."/>
            <person name="Kawashima K."/>
            <person name="Kishida Y."/>
            <person name="Kiyokawa C."/>
            <person name="Kohara M."/>
            <person name="Matsumoto M."/>
            <person name="Matsuno A."/>
            <person name="Nakazaki N."/>
            <person name="Shimpo S."/>
            <person name="Takeuchi C."/>
            <person name="Yamada M."/>
            <person name="Tabata S."/>
        </authorList>
    </citation>
    <scope>NUCLEOTIDE SEQUENCE [LARGE SCALE GENOMIC DNA]</scope>
    <source>
        <strain>ATCC 29082 / PCC 7421</strain>
    </source>
</reference>
<gene>
    <name evidence="1" type="primary">folD</name>
    <name type="ordered locus">gll1884</name>
</gene>
<organism>
    <name type="scientific">Gloeobacter violaceus (strain ATCC 29082 / PCC 7421)</name>
    <dbReference type="NCBI Taxonomy" id="251221"/>
    <lineage>
        <taxon>Bacteria</taxon>
        <taxon>Bacillati</taxon>
        <taxon>Cyanobacteriota</taxon>
        <taxon>Cyanophyceae</taxon>
        <taxon>Gloeobacterales</taxon>
        <taxon>Gloeobacteraceae</taxon>
        <taxon>Gloeobacter</taxon>
    </lineage>
</organism>
<comment type="function">
    <text evidence="1">Catalyzes the oxidation of 5,10-methylenetetrahydrofolate to 5,10-methenyltetrahydrofolate and then the hydrolysis of 5,10-methenyltetrahydrofolate to 10-formyltetrahydrofolate.</text>
</comment>
<comment type="catalytic activity">
    <reaction evidence="1">
        <text>(6R)-5,10-methylene-5,6,7,8-tetrahydrofolate + NADP(+) = (6R)-5,10-methenyltetrahydrofolate + NADPH</text>
        <dbReference type="Rhea" id="RHEA:22812"/>
        <dbReference type="ChEBI" id="CHEBI:15636"/>
        <dbReference type="ChEBI" id="CHEBI:57455"/>
        <dbReference type="ChEBI" id="CHEBI:57783"/>
        <dbReference type="ChEBI" id="CHEBI:58349"/>
        <dbReference type="EC" id="1.5.1.5"/>
    </reaction>
</comment>
<comment type="catalytic activity">
    <reaction evidence="1">
        <text>(6R)-5,10-methenyltetrahydrofolate + H2O = (6R)-10-formyltetrahydrofolate + H(+)</text>
        <dbReference type="Rhea" id="RHEA:23700"/>
        <dbReference type="ChEBI" id="CHEBI:15377"/>
        <dbReference type="ChEBI" id="CHEBI:15378"/>
        <dbReference type="ChEBI" id="CHEBI:57455"/>
        <dbReference type="ChEBI" id="CHEBI:195366"/>
        <dbReference type="EC" id="3.5.4.9"/>
    </reaction>
</comment>
<comment type="pathway">
    <text evidence="1">One-carbon metabolism; tetrahydrofolate interconversion.</text>
</comment>
<comment type="subunit">
    <text evidence="1">Homodimer.</text>
</comment>
<comment type="similarity">
    <text evidence="1">Belongs to the tetrahydrofolate dehydrogenase/cyclohydrolase family.</text>
</comment>
<feature type="chain" id="PRO_0000268362" description="Bifunctional protein FolD">
    <location>
        <begin position="1"/>
        <end position="290"/>
    </location>
</feature>
<feature type="binding site" evidence="1">
    <location>
        <begin position="167"/>
        <end position="169"/>
    </location>
    <ligand>
        <name>NADP(+)</name>
        <dbReference type="ChEBI" id="CHEBI:58349"/>
    </ligand>
</feature>
<feature type="binding site" evidence="1">
    <location>
        <position position="192"/>
    </location>
    <ligand>
        <name>NADP(+)</name>
        <dbReference type="ChEBI" id="CHEBI:58349"/>
    </ligand>
</feature>
<feature type="binding site" evidence="1">
    <location>
        <position position="233"/>
    </location>
    <ligand>
        <name>NADP(+)</name>
        <dbReference type="ChEBI" id="CHEBI:58349"/>
    </ligand>
</feature>
<evidence type="ECO:0000255" key="1">
    <source>
        <dbReference type="HAMAP-Rule" id="MF_01576"/>
    </source>
</evidence>
<dbReference type="EC" id="1.5.1.5" evidence="1"/>
<dbReference type="EC" id="3.5.4.9" evidence="1"/>
<dbReference type="EMBL" id="BA000045">
    <property type="protein sequence ID" value="BAC89825.1"/>
    <property type="molecule type" value="Genomic_DNA"/>
</dbReference>
<dbReference type="RefSeq" id="NP_924830.1">
    <property type="nucleotide sequence ID" value="NC_005125.1"/>
</dbReference>
<dbReference type="RefSeq" id="WP_011141882.1">
    <property type="nucleotide sequence ID" value="NC_005125.1"/>
</dbReference>
<dbReference type="SMR" id="Q7NJE8"/>
<dbReference type="FunCoup" id="Q7NJE8">
    <property type="interactions" value="309"/>
</dbReference>
<dbReference type="STRING" id="251221.gene:10759376"/>
<dbReference type="EnsemblBacteria" id="BAC89825">
    <property type="protein sequence ID" value="BAC89825"/>
    <property type="gene ID" value="BAC89825"/>
</dbReference>
<dbReference type="KEGG" id="gvi:gll1884"/>
<dbReference type="PATRIC" id="fig|251221.4.peg.1916"/>
<dbReference type="eggNOG" id="COG0190">
    <property type="taxonomic scope" value="Bacteria"/>
</dbReference>
<dbReference type="HOGENOM" id="CLU_034045_2_1_3"/>
<dbReference type="InParanoid" id="Q7NJE8"/>
<dbReference type="OrthoDB" id="9803580at2"/>
<dbReference type="PhylomeDB" id="Q7NJE8"/>
<dbReference type="UniPathway" id="UPA00193"/>
<dbReference type="Proteomes" id="UP000000557">
    <property type="component" value="Chromosome"/>
</dbReference>
<dbReference type="GO" id="GO:0005829">
    <property type="term" value="C:cytosol"/>
    <property type="evidence" value="ECO:0000318"/>
    <property type="project" value="GO_Central"/>
</dbReference>
<dbReference type="GO" id="GO:0004477">
    <property type="term" value="F:methenyltetrahydrofolate cyclohydrolase activity"/>
    <property type="evidence" value="ECO:0000318"/>
    <property type="project" value="GO_Central"/>
</dbReference>
<dbReference type="GO" id="GO:0004488">
    <property type="term" value="F:methylenetetrahydrofolate dehydrogenase (NADP+) activity"/>
    <property type="evidence" value="ECO:0000318"/>
    <property type="project" value="GO_Central"/>
</dbReference>
<dbReference type="GO" id="GO:0000105">
    <property type="term" value="P:L-histidine biosynthetic process"/>
    <property type="evidence" value="ECO:0007669"/>
    <property type="project" value="UniProtKB-KW"/>
</dbReference>
<dbReference type="GO" id="GO:0009086">
    <property type="term" value="P:methionine biosynthetic process"/>
    <property type="evidence" value="ECO:0007669"/>
    <property type="project" value="UniProtKB-KW"/>
</dbReference>
<dbReference type="GO" id="GO:0006164">
    <property type="term" value="P:purine nucleotide biosynthetic process"/>
    <property type="evidence" value="ECO:0007669"/>
    <property type="project" value="UniProtKB-KW"/>
</dbReference>
<dbReference type="GO" id="GO:0035999">
    <property type="term" value="P:tetrahydrofolate interconversion"/>
    <property type="evidence" value="ECO:0000318"/>
    <property type="project" value="GO_Central"/>
</dbReference>
<dbReference type="CDD" id="cd01080">
    <property type="entry name" value="NAD_bind_m-THF_DH_Cyclohyd"/>
    <property type="match status" value="1"/>
</dbReference>
<dbReference type="FunFam" id="3.40.50.720:FF:000006">
    <property type="entry name" value="Bifunctional protein FolD"/>
    <property type="match status" value="1"/>
</dbReference>
<dbReference type="FunFam" id="3.40.50.10860:FF:000005">
    <property type="entry name" value="C-1-tetrahydrofolate synthase, cytoplasmic, putative"/>
    <property type="match status" value="1"/>
</dbReference>
<dbReference type="Gene3D" id="3.40.50.10860">
    <property type="entry name" value="Leucine Dehydrogenase, chain A, domain 1"/>
    <property type="match status" value="1"/>
</dbReference>
<dbReference type="Gene3D" id="3.40.50.720">
    <property type="entry name" value="NAD(P)-binding Rossmann-like Domain"/>
    <property type="match status" value="1"/>
</dbReference>
<dbReference type="HAMAP" id="MF_01576">
    <property type="entry name" value="THF_DHG_CYH"/>
    <property type="match status" value="1"/>
</dbReference>
<dbReference type="InterPro" id="IPR046346">
    <property type="entry name" value="Aminoacid_DH-like_N_sf"/>
</dbReference>
<dbReference type="InterPro" id="IPR036291">
    <property type="entry name" value="NAD(P)-bd_dom_sf"/>
</dbReference>
<dbReference type="InterPro" id="IPR000672">
    <property type="entry name" value="THF_DH/CycHdrlase"/>
</dbReference>
<dbReference type="InterPro" id="IPR020630">
    <property type="entry name" value="THF_DH/CycHdrlase_cat_dom"/>
</dbReference>
<dbReference type="InterPro" id="IPR020867">
    <property type="entry name" value="THF_DH/CycHdrlase_CS"/>
</dbReference>
<dbReference type="InterPro" id="IPR020631">
    <property type="entry name" value="THF_DH/CycHdrlase_NAD-bd_dom"/>
</dbReference>
<dbReference type="NCBIfam" id="NF010783">
    <property type="entry name" value="PRK14186.1"/>
    <property type="match status" value="1"/>
</dbReference>
<dbReference type="PANTHER" id="PTHR48099:SF5">
    <property type="entry name" value="C-1-TETRAHYDROFOLATE SYNTHASE, CYTOPLASMIC"/>
    <property type="match status" value="1"/>
</dbReference>
<dbReference type="PANTHER" id="PTHR48099">
    <property type="entry name" value="C-1-TETRAHYDROFOLATE SYNTHASE, CYTOPLASMIC-RELATED"/>
    <property type="match status" value="1"/>
</dbReference>
<dbReference type="Pfam" id="PF00763">
    <property type="entry name" value="THF_DHG_CYH"/>
    <property type="match status" value="1"/>
</dbReference>
<dbReference type="Pfam" id="PF02882">
    <property type="entry name" value="THF_DHG_CYH_C"/>
    <property type="match status" value="1"/>
</dbReference>
<dbReference type="PRINTS" id="PR00085">
    <property type="entry name" value="THFDHDRGNASE"/>
</dbReference>
<dbReference type="SUPFAM" id="SSF53223">
    <property type="entry name" value="Aminoacid dehydrogenase-like, N-terminal domain"/>
    <property type="match status" value="1"/>
</dbReference>
<dbReference type="SUPFAM" id="SSF51735">
    <property type="entry name" value="NAD(P)-binding Rossmann-fold domains"/>
    <property type="match status" value="1"/>
</dbReference>
<dbReference type="PROSITE" id="PS00766">
    <property type="entry name" value="THF_DHG_CYH_1"/>
    <property type="match status" value="1"/>
</dbReference>
<sequence>MSAAILDGKALAARIQAELTCEVQSLQERFGRPPGLSVLWVGDNPASAAYVRNKNKSGQAVGIDVAKSQHLKASLSETQLLALIDRLNADVTVDGILVQLPLPEHIDSGRVLNRIAPEKDVDGLHPVNLGRLVRGEPGLRSCTPAGVMRILSEAGVPLAGKTAVVIGRSILVGKPVALMLLEKDATVITTHSRTADLAAITQMADVLVVAAGRPELVTAAMVRPGAVVIDVGINRVTDYEGNSRLVGDVDFDSVRDVAAAITPVPRGVGPMTVTMLLANTVQSYKQRLIE</sequence>
<name>FOLD_GLOVI</name>
<keyword id="KW-0028">Amino-acid biosynthesis</keyword>
<keyword id="KW-0368">Histidine biosynthesis</keyword>
<keyword id="KW-0378">Hydrolase</keyword>
<keyword id="KW-0486">Methionine biosynthesis</keyword>
<keyword id="KW-0511">Multifunctional enzyme</keyword>
<keyword id="KW-0521">NADP</keyword>
<keyword id="KW-0554">One-carbon metabolism</keyword>
<keyword id="KW-0560">Oxidoreductase</keyword>
<keyword id="KW-0658">Purine biosynthesis</keyword>
<keyword id="KW-1185">Reference proteome</keyword>